<feature type="chain" id="PRO_0000430346" description="Cobalt-factor III methyltransferase">
    <location>
        <begin position="1"/>
        <end position="540"/>
    </location>
</feature>
<feature type="binding site">
    <location>
        <position position="402"/>
    </location>
    <ligand>
        <name>[4Fe-4S] cluster</name>
        <dbReference type="ChEBI" id="CHEBI:49883"/>
    </ligand>
</feature>
<feature type="binding site" evidence="1">
    <location>
        <position position="405"/>
    </location>
    <ligand>
        <name>[4Fe-4S] cluster</name>
        <dbReference type="ChEBI" id="CHEBI:49883"/>
    </ligand>
</feature>
<feature type="binding site" evidence="1">
    <location>
        <position position="439"/>
    </location>
    <ligand>
        <name>[4Fe-4S] cluster</name>
        <dbReference type="ChEBI" id="CHEBI:49883"/>
    </ligand>
</feature>
<feature type="binding site">
    <location>
        <position position="443"/>
    </location>
    <ligand>
        <name>[4Fe-4S] cluster</name>
        <dbReference type="ChEBI" id="CHEBI:49883"/>
    </ligand>
</feature>
<feature type="mutagenesis site" description="No iron-sulfur cluster formed. Low activity with cobalt-factor III as substrate. Normal activity with Co-precorrin 3." evidence="2">
    <original>C</original>
    <variation>A</variation>
    <location>
        <position position="402"/>
    </location>
</feature>
<feature type="mutagenesis site" description="No iron-sulfur cluster formed. Low activity with cobalt-factor III as substrate. Normal activity with Co-precorrin 3." evidence="2">
    <original>C</original>
    <variation>A</variation>
    <location>
        <position position="443"/>
    </location>
</feature>
<organism>
    <name type="scientific">Priestia megaterium</name>
    <name type="common">Bacillus megaterium</name>
    <dbReference type="NCBI Taxonomy" id="1404"/>
    <lineage>
        <taxon>Bacteria</taxon>
        <taxon>Bacillati</taxon>
        <taxon>Bacillota</taxon>
        <taxon>Bacilli</taxon>
        <taxon>Bacillales</taxon>
        <taxon>Bacillaceae</taxon>
        <taxon>Priestia</taxon>
    </lineage>
</organism>
<protein>
    <recommendedName>
        <fullName>Cobalt-factor III methyltransferase</fullName>
        <ecNumber>2.1.1.272</ecNumber>
    </recommendedName>
    <alternativeName>
        <fullName>Cobalt-precorrin-3 methylase</fullName>
    </alternativeName>
</protein>
<reference key="1">
    <citation type="journal article" date="1998" name="Biochem. J.">
        <title>Cobalamin (vitamin B12) biosynthesis: identification and characterization of a Bacillus megaterium cobI operon.</title>
        <authorList>
            <person name="Raux E."/>
            <person name="Lanois A."/>
            <person name="Warren M.J."/>
            <person name="Rambach A."/>
            <person name="Thermes C."/>
        </authorList>
    </citation>
    <scope>NUCLEOTIDE SEQUENCE [GENOMIC DNA]</scope>
    <source>
        <strain>DSM 509 / CCM 1464 / NBRC 12109</strain>
    </source>
</reference>
<reference key="2">
    <citation type="journal article" date="2013" name="J. Biol. Chem.">
        <title>Characterization of the enzyme CbiH60 involved in anaerobic ring contraction of the cobalamin (vitamin B12) biosynthetic pathway.</title>
        <authorList>
            <person name="Moore S.J."/>
            <person name="Biedendieck R."/>
            <person name="Lawrence A.D."/>
            <person name="Deery E."/>
            <person name="Howard M.J."/>
            <person name="Rigby S.E."/>
            <person name="Warren M.J."/>
        </authorList>
    </citation>
    <scope>FUNCTION</scope>
    <scope>CATALYTIC ACTIVITY</scope>
    <scope>COFACTOR</scope>
    <scope>MUTAGENESIS OF CYS-402 AND CYS-443</scope>
    <source>
        <strain>DSM 509 / CCM 1464 / NBRC 12109</strain>
    </source>
</reference>
<name>CBIH_PRIMG</name>
<dbReference type="EC" id="2.1.1.272"/>
<dbReference type="EMBL" id="AJ000758">
    <property type="protein sequence ID" value="CAA04307.1"/>
    <property type="molecule type" value="Genomic_DNA"/>
</dbReference>
<dbReference type="PIR" id="T44683">
    <property type="entry name" value="T44683"/>
</dbReference>
<dbReference type="SMR" id="O87689"/>
<dbReference type="BioCyc" id="MetaCyc:MONOMER-17924"/>
<dbReference type="BRENDA" id="2.1.1.272">
    <property type="organism ID" value="656"/>
</dbReference>
<dbReference type="UniPathway" id="UPA00148"/>
<dbReference type="GO" id="GO:0051539">
    <property type="term" value="F:4 iron, 4 sulfur cluster binding"/>
    <property type="evidence" value="ECO:0007669"/>
    <property type="project" value="UniProtKB-KW"/>
</dbReference>
<dbReference type="GO" id="GO:0020037">
    <property type="term" value="F:heme binding"/>
    <property type="evidence" value="ECO:0007669"/>
    <property type="project" value="InterPro"/>
</dbReference>
<dbReference type="GO" id="GO:0046872">
    <property type="term" value="F:metal ion binding"/>
    <property type="evidence" value="ECO:0007669"/>
    <property type="project" value="UniProtKB-KW"/>
</dbReference>
<dbReference type="GO" id="GO:0008168">
    <property type="term" value="F:methyltransferase activity"/>
    <property type="evidence" value="ECO:0007669"/>
    <property type="project" value="UniProtKB-KW"/>
</dbReference>
<dbReference type="GO" id="GO:0016491">
    <property type="term" value="F:oxidoreductase activity"/>
    <property type="evidence" value="ECO:0007669"/>
    <property type="project" value="InterPro"/>
</dbReference>
<dbReference type="GO" id="GO:0009236">
    <property type="term" value="P:cobalamin biosynthetic process"/>
    <property type="evidence" value="ECO:0007669"/>
    <property type="project" value="UniProtKB-UniPathway"/>
</dbReference>
<dbReference type="GO" id="GO:0032259">
    <property type="term" value="P:methylation"/>
    <property type="evidence" value="ECO:0007669"/>
    <property type="project" value="UniProtKB-KW"/>
</dbReference>
<dbReference type="CDD" id="cd11646">
    <property type="entry name" value="Precorrin_3B_C17_MT"/>
    <property type="match status" value="1"/>
</dbReference>
<dbReference type="Gene3D" id="3.40.1010.10">
    <property type="entry name" value="Cobalt-precorrin-4 Transmethylase, Domain 1"/>
    <property type="match status" value="1"/>
</dbReference>
<dbReference type="Gene3D" id="3.30.950.10">
    <property type="entry name" value="Methyltransferase, Cobalt-precorrin-4 Transmethylase, Domain 2"/>
    <property type="match status" value="1"/>
</dbReference>
<dbReference type="Gene3D" id="3.30.413.10">
    <property type="entry name" value="Sulfite Reductase Hemoprotein, domain 1"/>
    <property type="match status" value="1"/>
</dbReference>
<dbReference type="InterPro" id="IPR000878">
    <property type="entry name" value="4pyrrol_Mease"/>
</dbReference>
<dbReference type="InterPro" id="IPR035996">
    <property type="entry name" value="4pyrrol_Methylase_sf"/>
</dbReference>
<dbReference type="InterPro" id="IPR014777">
    <property type="entry name" value="4pyrrole_Mease_sub1"/>
</dbReference>
<dbReference type="InterPro" id="IPR014776">
    <property type="entry name" value="4pyrrole_Mease_sub2"/>
</dbReference>
<dbReference type="InterPro" id="IPR006363">
    <property type="entry name" value="Cbl_synth_CobJ/CibH_dom"/>
</dbReference>
<dbReference type="InterPro" id="IPR006067">
    <property type="entry name" value="NO2/SO3_Rdtase_4Fe4S_dom"/>
</dbReference>
<dbReference type="InterPro" id="IPR045854">
    <property type="entry name" value="NO2/SO3_Rdtase_4Fe4S_sf"/>
</dbReference>
<dbReference type="InterPro" id="IPR006066">
    <property type="entry name" value="NO2/SO3_Rdtase_FeS/sirohaem_BS"/>
</dbReference>
<dbReference type="InterPro" id="IPR051810">
    <property type="entry name" value="Precorrin_MeTrfase"/>
</dbReference>
<dbReference type="NCBIfam" id="TIGR01466">
    <property type="entry name" value="cobJ_cbiH"/>
    <property type="match status" value="1"/>
</dbReference>
<dbReference type="PANTHER" id="PTHR47036">
    <property type="entry name" value="COBALT-FACTOR III C(17)-METHYLTRANSFERASE-RELATED"/>
    <property type="match status" value="1"/>
</dbReference>
<dbReference type="PANTHER" id="PTHR47036:SF1">
    <property type="entry name" value="COBALT-FACTOR III C(17)-METHYLTRANSFERASE-RELATED"/>
    <property type="match status" value="1"/>
</dbReference>
<dbReference type="Pfam" id="PF01077">
    <property type="entry name" value="NIR_SIR"/>
    <property type="match status" value="1"/>
</dbReference>
<dbReference type="Pfam" id="PF00590">
    <property type="entry name" value="TP_methylase"/>
    <property type="match status" value="1"/>
</dbReference>
<dbReference type="SUPFAM" id="SSF56014">
    <property type="entry name" value="Nitrite and sulphite reductase 4Fe-4S domain-like"/>
    <property type="match status" value="1"/>
</dbReference>
<dbReference type="SUPFAM" id="SSF53790">
    <property type="entry name" value="Tetrapyrrole methylase"/>
    <property type="match status" value="1"/>
</dbReference>
<dbReference type="PROSITE" id="PS00365">
    <property type="entry name" value="NIR_SIR"/>
    <property type="match status" value="1"/>
</dbReference>
<evidence type="ECO:0000255" key="1"/>
<evidence type="ECO:0000269" key="2">
    <source>
    </source>
</evidence>
<evidence type="ECO:0000305" key="3"/>
<proteinExistence type="evidence at protein level"/>
<sequence>MKGKLLVIGFGPGSFEHITQRAREAIQESDMIIGYKTYVELIQGLLTNQQIISTGMTEEVSRAQEAVKQAEAGKTVAVISSGDAGVYGMAGLVYEVLIEKGWKKETGVELEVIPGISAINSCASLLGAPVMHDACTISLSDHLTPWELIEKRIEAAAQADFVVAFYNPKSGRRTRQIVEAQRILLKYRSPDTPVGLVKSAYRDREEVVMTNLKDMLNHEIGMLTTVVVGNSSTFFYDDLMITPRGYQRKYTLNQTEQPLRPHQRLRKEAEPWALDQEEAVKQSASAIEAVQNTREETAASRALAEEALQAILGESTSAVVHQPIESIFEVAVSPGLANKKFTPVQMTTLAEVVGEKGTMEYTPDHQIKLQIPTAHPDMIIEKLQAASFLLSPVGDVFTIKACDFCDGEKSDAIPHTEELQKRLGGMDMPKELKLGINGCGMACYGAVQEDIGIVYRKGAFDLFLGAKTVGRNAHSGQIVAEGIAPDDIVEIVENIIHEYKEKGHPNERFHKFFKRVKNVYGFDYQDITPKIKVEPAPCGD</sequence>
<accession>O87689</accession>
<keyword id="KW-0004">4Fe-4S</keyword>
<keyword id="KW-0169">Cobalamin biosynthesis</keyword>
<keyword id="KW-0408">Iron</keyword>
<keyword id="KW-0411">Iron-sulfur</keyword>
<keyword id="KW-0479">Metal-binding</keyword>
<keyword id="KW-0489">Methyltransferase</keyword>
<keyword id="KW-0949">S-adenosyl-L-methionine</keyword>
<keyword id="KW-0808">Transferase</keyword>
<comment type="function">
    <text evidence="2">Methyltransferase that catalyzes the reduction, ring contraction and methylation of C-17 in cobalt-factor III to form cobalt-precorrin-4. Is also able to convert cobalt-precorrin-3 to cobalt-precorrin-4.</text>
</comment>
<comment type="catalytic activity">
    <reaction evidence="2">
        <text>Co(II)-factor III + AH2 + S-adenosyl-L-methionine = Co-precorrin-4 + A + S-adenosyl-L-homocysteine</text>
        <dbReference type="Rhea" id="RHEA:36155"/>
        <dbReference type="ChEBI" id="CHEBI:13193"/>
        <dbReference type="ChEBI" id="CHEBI:17499"/>
        <dbReference type="ChEBI" id="CHEBI:57856"/>
        <dbReference type="ChEBI" id="CHEBI:59789"/>
        <dbReference type="ChEBI" id="CHEBI:60061"/>
        <dbReference type="ChEBI" id="CHEBI:73299"/>
        <dbReference type="EC" id="2.1.1.272"/>
    </reaction>
</comment>
<comment type="cofactor">
    <cofactor evidence="2">
        <name>[4Fe-4S] cluster</name>
        <dbReference type="ChEBI" id="CHEBI:49883"/>
    </cofactor>
    <text evidence="2">Binds 1 [4Fe-4S] cluster.</text>
</comment>
<comment type="pathway">
    <text>Cofactor biosynthesis; adenosylcobalamin biosynthesis.</text>
</comment>
<comment type="similarity">
    <text evidence="3">In the N-terminal section; belongs to the precorrin methyltransferase family.</text>
</comment>
<gene>
    <name type="primary">cbiH60</name>
</gene>